<name>PURT_SALPK</name>
<proteinExistence type="inferred from homology"/>
<reference key="1">
    <citation type="journal article" date="2009" name="BMC Genomics">
        <title>Pseudogene accumulation in the evolutionary histories of Salmonella enterica serovars Paratyphi A and Typhi.</title>
        <authorList>
            <person name="Holt K.E."/>
            <person name="Thomson N.R."/>
            <person name="Wain J."/>
            <person name="Langridge G.C."/>
            <person name="Hasan R."/>
            <person name="Bhutta Z.A."/>
            <person name="Quail M.A."/>
            <person name="Norbertczak H."/>
            <person name="Walker D."/>
            <person name="Simmonds M."/>
            <person name="White B."/>
            <person name="Bason N."/>
            <person name="Mungall K."/>
            <person name="Dougan G."/>
            <person name="Parkhill J."/>
        </authorList>
    </citation>
    <scope>NUCLEOTIDE SEQUENCE [LARGE SCALE GENOMIC DNA]</scope>
    <source>
        <strain>AKU_12601</strain>
    </source>
</reference>
<sequence length="392" mass="42166">MTLLGTALRPAATRVMLLGAGELGKEVAIECQRLGIEVIAVDRYPDAPAMHVAHRSHVINMLDGEALRHVITEEKPHYIVPEIEAIATDTLRELEGEGLNVVPCARATQLTMNREGIRRLAAEELGLPTSTYRFADSEASFHDAVAAVGFPCIVKPVMSSSGKGQSFIRSAEQLAQAWEYAQQGGRAGAGRVIVEGVVKFDFEITLLTVSAVDGVHFCAPVGHRQQDGDYRESWQPQQMSELALKRAQEIARHVVLALGGHGLFGVELFVCGDEVIFSEVSPRPHDTGMVTLISQDLSEFALHVRAFLGMPIGAIRQYGPAASAVILPQLTSQNVTFDDVHAAVGAGVQVRLFGKPEIDGTRRLGVALATGENVEEAVIRAKKAASRVTVKG</sequence>
<comment type="function">
    <text evidence="1">Involved in the de novo purine biosynthesis. Catalyzes the transfer of formate to 5-phospho-ribosyl-glycinamide (GAR), producing 5-phospho-ribosyl-N-formylglycinamide (FGAR). Formate is provided by PurU via hydrolysis of 10-formyl-tetrahydrofolate.</text>
</comment>
<comment type="catalytic activity">
    <reaction evidence="1">
        <text>N(1)-(5-phospho-beta-D-ribosyl)glycinamide + formate + ATP = N(2)-formyl-N(1)-(5-phospho-beta-D-ribosyl)glycinamide + ADP + phosphate + H(+)</text>
        <dbReference type="Rhea" id="RHEA:24829"/>
        <dbReference type="ChEBI" id="CHEBI:15378"/>
        <dbReference type="ChEBI" id="CHEBI:15740"/>
        <dbReference type="ChEBI" id="CHEBI:30616"/>
        <dbReference type="ChEBI" id="CHEBI:43474"/>
        <dbReference type="ChEBI" id="CHEBI:143788"/>
        <dbReference type="ChEBI" id="CHEBI:147286"/>
        <dbReference type="ChEBI" id="CHEBI:456216"/>
        <dbReference type="EC" id="6.3.1.21"/>
    </reaction>
    <physiologicalReaction direction="left-to-right" evidence="1">
        <dbReference type="Rhea" id="RHEA:24830"/>
    </physiologicalReaction>
</comment>
<comment type="pathway">
    <text evidence="1">Purine metabolism; IMP biosynthesis via de novo pathway; N(2)-formyl-N(1)-(5-phospho-D-ribosyl)glycinamide from N(1)-(5-phospho-D-ribosyl)glycinamide (formate route): step 1/1.</text>
</comment>
<comment type="subunit">
    <text evidence="1">Homodimer.</text>
</comment>
<comment type="similarity">
    <text evidence="1">Belongs to the PurK/PurT family.</text>
</comment>
<gene>
    <name evidence="1" type="primary">purT</name>
    <name type="ordered locus">SSPA0920</name>
</gene>
<evidence type="ECO:0000255" key="1">
    <source>
        <dbReference type="HAMAP-Rule" id="MF_01643"/>
    </source>
</evidence>
<dbReference type="EC" id="6.3.1.21" evidence="1"/>
<dbReference type="EMBL" id="FM200053">
    <property type="protein sequence ID" value="CAR59064.1"/>
    <property type="molecule type" value="Genomic_DNA"/>
</dbReference>
<dbReference type="RefSeq" id="WP_000173426.1">
    <property type="nucleotide sequence ID" value="NC_011147.1"/>
</dbReference>
<dbReference type="SMR" id="B5BH72"/>
<dbReference type="KEGG" id="sek:SSPA0920"/>
<dbReference type="HOGENOM" id="CLU_011534_1_3_6"/>
<dbReference type="UniPathway" id="UPA00074">
    <property type="reaction ID" value="UER00127"/>
</dbReference>
<dbReference type="Proteomes" id="UP000001869">
    <property type="component" value="Chromosome"/>
</dbReference>
<dbReference type="GO" id="GO:0005829">
    <property type="term" value="C:cytosol"/>
    <property type="evidence" value="ECO:0007669"/>
    <property type="project" value="TreeGrafter"/>
</dbReference>
<dbReference type="GO" id="GO:0005524">
    <property type="term" value="F:ATP binding"/>
    <property type="evidence" value="ECO:0007669"/>
    <property type="project" value="UniProtKB-UniRule"/>
</dbReference>
<dbReference type="GO" id="GO:0000287">
    <property type="term" value="F:magnesium ion binding"/>
    <property type="evidence" value="ECO:0007669"/>
    <property type="project" value="InterPro"/>
</dbReference>
<dbReference type="GO" id="GO:0043815">
    <property type="term" value="F:phosphoribosylglycinamide formyltransferase 2 activity"/>
    <property type="evidence" value="ECO:0007669"/>
    <property type="project" value="UniProtKB-UniRule"/>
</dbReference>
<dbReference type="GO" id="GO:0004644">
    <property type="term" value="F:phosphoribosylglycinamide formyltransferase activity"/>
    <property type="evidence" value="ECO:0007669"/>
    <property type="project" value="InterPro"/>
</dbReference>
<dbReference type="GO" id="GO:0006189">
    <property type="term" value="P:'de novo' IMP biosynthetic process"/>
    <property type="evidence" value="ECO:0007669"/>
    <property type="project" value="UniProtKB-UniRule"/>
</dbReference>
<dbReference type="FunFam" id="3.30.1490.20:FF:000013">
    <property type="entry name" value="Formate-dependent phosphoribosylglycinamide formyltransferase"/>
    <property type="match status" value="1"/>
</dbReference>
<dbReference type="FunFam" id="3.30.470.20:FF:000027">
    <property type="entry name" value="Formate-dependent phosphoribosylglycinamide formyltransferase"/>
    <property type="match status" value="1"/>
</dbReference>
<dbReference type="FunFam" id="3.40.50.20:FF:000007">
    <property type="entry name" value="Formate-dependent phosphoribosylglycinamide formyltransferase"/>
    <property type="match status" value="1"/>
</dbReference>
<dbReference type="Gene3D" id="3.40.50.20">
    <property type="match status" value="1"/>
</dbReference>
<dbReference type="Gene3D" id="3.30.1490.20">
    <property type="entry name" value="ATP-grasp fold, A domain"/>
    <property type="match status" value="1"/>
</dbReference>
<dbReference type="Gene3D" id="3.30.470.20">
    <property type="entry name" value="ATP-grasp fold, B domain"/>
    <property type="match status" value="1"/>
</dbReference>
<dbReference type="HAMAP" id="MF_01643">
    <property type="entry name" value="PurT"/>
    <property type="match status" value="1"/>
</dbReference>
<dbReference type="InterPro" id="IPR011761">
    <property type="entry name" value="ATP-grasp"/>
</dbReference>
<dbReference type="InterPro" id="IPR003135">
    <property type="entry name" value="ATP-grasp_carboxylate-amine"/>
</dbReference>
<dbReference type="InterPro" id="IPR013815">
    <property type="entry name" value="ATP_grasp_subdomain_1"/>
</dbReference>
<dbReference type="InterPro" id="IPR016185">
    <property type="entry name" value="PreATP-grasp_dom_sf"/>
</dbReference>
<dbReference type="InterPro" id="IPR005862">
    <property type="entry name" value="PurT"/>
</dbReference>
<dbReference type="InterPro" id="IPR054350">
    <property type="entry name" value="PurT/PurK_preATP-grasp"/>
</dbReference>
<dbReference type="InterPro" id="IPR048740">
    <property type="entry name" value="PurT_C"/>
</dbReference>
<dbReference type="InterPro" id="IPR011054">
    <property type="entry name" value="Rudment_hybrid_motif"/>
</dbReference>
<dbReference type="NCBIfam" id="NF006766">
    <property type="entry name" value="PRK09288.1"/>
    <property type="match status" value="1"/>
</dbReference>
<dbReference type="NCBIfam" id="TIGR01142">
    <property type="entry name" value="purT"/>
    <property type="match status" value="1"/>
</dbReference>
<dbReference type="PANTHER" id="PTHR43055">
    <property type="entry name" value="FORMATE-DEPENDENT PHOSPHORIBOSYLGLYCINAMIDE FORMYLTRANSFERASE"/>
    <property type="match status" value="1"/>
</dbReference>
<dbReference type="PANTHER" id="PTHR43055:SF1">
    <property type="entry name" value="FORMATE-DEPENDENT PHOSPHORIBOSYLGLYCINAMIDE FORMYLTRANSFERASE"/>
    <property type="match status" value="1"/>
</dbReference>
<dbReference type="Pfam" id="PF02222">
    <property type="entry name" value="ATP-grasp"/>
    <property type="match status" value="1"/>
</dbReference>
<dbReference type="Pfam" id="PF21244">
    <property type="entry name" value="PurT_C"/>
    <property type="match status" value="1"/>
</dbReference>
<dbReference type="Pfam" id="PF22660">
    <property type="entry name" value="RS_preATP-grasp-like"/>
    <property type="match status" value="1"/>
</dbReference>
<dbReference type="SUPFAM" id="SSF56059">
    <property type="entry name" value="Glutathione synthetase ATP-binding domain-like"/>
    <property type="match status" value="1"/>
</dbReference>
<dbReference type="SUPFAM" id="SSF52440">
    <property type="entry name" value="PreATP-grasp domain"/>
    <property type="match status" value="1"/>
</dbReference>
<dbReference type="SUPFAM" id="SSF51246">
    <property type="entry name" value="Rudiment single hybrid motif"/>
    <property type="match status" value="1"/>
</dbReference>
<dbReference type="PROSITE" id="PS50975">
    <property type="entry name" value="ATP_GRASP"/>
    <property type="match status" value="1"/>
</dbReference>
<feature type="chain" id="PRO_1000186895" description="Formate-dependent phosphoribosylglycinamide formyltransferase">
    <location>
        <begin position="1"/>
        <end position="392"/>
    </location>
</feature>
<feature type="domain" description="ATP-grasp" evidence="1">
    <location>
        <begin position="119"/>
        <end position="308"/>
    </location>
</feature>
<feature type="binding site" evidence="1">
    <location>
        <begin position="22"/>
        <end position="23"/>
    </location>
    <ligand>
        <name>N(1)-(5-phospho-beta-D-ribosyl)glycinamide</name>
        <dbReference type="ChEBI" id="CHEBI:143788"/>
    </ligand>
</feature>
<feature type="binding site" evidence="1">
    <location>
        <position position="82"/>
    </location>
    <ligand>
        <name>N(1)-(5-phospho-beta-D-ribosyl)glycinamide</name>
        <dbReference type="ChEBI" id="CHEBI:143788"/>
    </ligand>
</feature>
<feature type="binding site" evidence="1">
    <location>
        <position position="114"/>
    </location>
    <ligand>
        <name>ATP</name>
        <dbReference type="ChEBI" id="CHEBI:30616"/>
    </ligand>
</feature>
<feature type="binding site" evidence="1">
    <location>
        <position position="155"/>
    </location>
    <ligand>
        <name>ATP</name>
        <dbReference type="ChEBI" id="CHEBI:30616"/>
    </ligand>
</feature>
<feature type="binding site" evidence="1">
    <location>
        <begin position="160"/>
        <end position="165"/>
    </location>
    <ligand>
        <name>ATP</name>
        <dbReference type="ChEBI" id="CHEBI:30616"/>
    </ligand>
</feature>
<feature type="binding site" evidence="1">
    <location>
        <begin position="195"/>
        <end position="198"/>
    </location>
    <ligand>
        <name>ATP</name>
        <dbReference type="ChEBI" id="CHEBI:30616"/>
    </ligand>
</feature>
<feature type="binding site" evidence="1">
    <location>
        <position position="203"/>
    </location>
    <ligand>
        <name>ATP</name>
        <dbReference type="ChEBI" id="CHEBI:30616"/>
    </ligand>
</feature>
<feature type="binding site" evidence="1">
    <location>
        <position position="267"/>
    </location>
    <ligand>
        <name>Mg(2+)</name>
        <dbReference type="ChEBI" id="CHEBI:18420"/>
    </ligand>
</feature>
<feature type="binding site" evidence="1">
    <location>
        <position position="279"/>
    </location>
    <ligand>
        <name>Mg(2+)</name>
        <dbReference type="ChEBI" id="CHEBI:18420"/>
    </ligand>
</feature>
<feature type="binding site" evidence="1">
    <location>
        <position position="286"/>
    </location>
    <ligand>
        <name>N(1)-(5-phospho-beta-D-ribosyl)glycinamide</name>
        <dbReference type="ChEBI" id="CHEBI:143788"/>
    </ligand>
</feature>
<feature type="binding site" evidence="1">
    <location>
        <position position="355"/>
    </location>
    <ligand>
        <name>N(1)-(5-phospho-beta-D-ribosyl)glycinamide</name>
        <dbReference type="ChEBI" id="CHEBI:143788"/>
    </ligand>
</feature>
<feature type="binding site" evidence="1">
    <location>
        <begin position="362"/>
        <end position="363"/>
    </location>
    <ligand>
        <name>N(1)-(5-phospho-beta-D-ribosyl)glycinamide</name>
        <dbReference type="ChEBI" id="CHEBI:143788"/>
    </ligand>
</feature>
<protein>
    <recommendedName>
        <fullName evidence="1">Formate-dependent phosphoribosylglycinamide formyltransferase</fullName>
        <ecNumber evidence="1">6.3.1.21</ecNumber>
    </recommendedName>
    <alternativeName>
        <fullName evidence="1">5'-phosphoribosylglycinamide transformylase 2</fullName>
    </alternativeName>
    <alternativeName>
        <fullName evidence="1">Formate-dependent GAR transformylase</fullName>
    </alternativeName>
    <alternativeName>
        <fullName evidence="1">GAR transformylase 2</fullName>
        <shortName evidence="1">GART 2</shortName>
    </alternativeName>
    <alternativeName>
        <fullName evidence="1">Non-folate glycinamide ribonucleotide transformylase</fullName>
    </alternativeName>
    <alternativeName>
        <fullName evidence="1">Phosphoribosylglycinamide formyltransferase 2</fullName>
    </alternativeName>
</protein>
<keyword id="KW-0067">ATP-binding</keyword>
<keyword id="KW-0436">Ligase</keyword>
<keyword id="KW-0460">Magnesium</keyword>
<keyword id="KW-0479">Metal-binding</keyword>
<keyword id="KW-0547">Nucleotide-binding</keyword>
<keyword id="KW-0658">Purine biosynthesis</keyword>
<organism>
    <name type="scientific">Salmonella paratyphi A (strain AKU_12601)</name>
    <dbReference type="NCBI Taxonomy" id="554290"/>
    <lineage>
        <taxon>Bacteria</taxon>
        <taxon>Pseudomonadati</taxon>
        <taxon>Pseudomonadota</taxon>
        <taxon>Gammaproteobacteria</taxon>
        <taxon>Enterobacterales</taxon>
        <taxon>Enterobacteriaceae</taxon>
        <taxon>Salmonella</taxon>
    </lineage>
</organism>
<accession>B5BH72</accession>